<gene>
    <name type="primary">ctaC</name>
    <name type="ordered locus">Rv2200c</name>
    <name type="ORF">MTCY190.11c</name>
</gene>
<keyword id="KW-0002">3D-structure</keyword>
<keyword id="KW-1003">Cell membrane</keyword>
<keyword id="KW-0186">Copper</keyword>
<keyword id="KW-0249">Electron transport</keyword>
<keyword id="KW-0349">Heme</keyword>
<keyword id="KW-0408">Iron</keyword>
<keyword id="KW-0472">Membrane</keyword>
<keyword id="KW-0479">Metal-binding</keyword>
<keyword id="KW-1185">Reference proteome</keyword>
<keyword id="KW-0679">Respiratory chain</keyword>
<keyword id="KW-0732">Signal</keyword>
<keyword id="KW-1278">Translocase</keyword>
<keyword id="KW-0812">Transmembrane</keyword>
<keyword id="KW-1133">Transmembrane helix</keyword>
<keyword id="KW-0813">Transport</keyword>
<dbReference type="EC" id="7.1.1.9"/>
<dbReference type="EMBL" id="AF009357">
    <property type="protein sequence ID" value="AAB69853.1"/>
    <property type="status" value="ALT_INIT"/>
    <property type="molecule type" value="Genomic_DNA"/>
</dbReference>
<dbReference type="EMBL" id="AL123456">
    <property type="protein sequence ID" value="CCP44977.1"/>
    <property type="molecule type" value="Genomic_DNA"/>
</dbReference>
<dbReference type="PIR" id="A70785">
    <property type="entry name" value="A70785"/>
</dbReference>
<dbReference type="RefSeq" id="NP_216716.1">
    <property type="nucleotide sequence ID" value="NC_000962.3"/>
</dbReference>
<dbReference type="RefSeq" id="WP_003899214.1">
    <property type="nucleotide sequence ID" value="NZ_NVQJ01000008.1"/>
</dbReference>
<dbReference type="PDB" id="8HCR">
    <property type="method" value="EM"/>
    <property type="chains" value="E/Q=1-363"/>
</dbReference>
<dbReference type="PDBsum" id="8HCR"/>
<dbReference type="EMDB" id="EMD-34664"/>
<dbReference type="SMR" id="P9WP69"/>
<dbReference type="FunCoup" id="P9WP69">
    <property type="interactions" value="67"/>
</dbReference>
<dbReference type="STRING" id="83332.Rv2200c"/>
<dbReference type="PaxDb" id="83332-Rv2200c"/>
<dbReference type="DNASU" id="888799"/>
<dbReference type="GeneID" id="888799"/>
<dbReference type="KEGG" id="mtu:Rv2200c"/>
<dbReference type="KEGG" id="mtv:RVBD_2200c"/>
<dbReference type="TubercuList" id="Rv2200c"/>
<dbReference type="eggNOG" id="COG1622">
    <property type="taxonomic scope" value="Bacteria"/>
</dbReference>
<dbReference type="InParanoid" id="P9WP69"/>
<dbReference type="OrthoDB" id="9781261at2"/>
<dbReference type="PhylomeDB" id="P9WP69"/>
<dbReference type="Proteomes" id="UP000001584">
    <property type="component" value="Chromosome"/>
</dbReference>
<dbReference type="GO" id="GO:0005576">
    <property type="term" value="C:extracellular region"/>
    <property type="evidence" value="ECO:0007005"/>
    <property type="project" value="MTBBASE"/>
</dbReference>
<dbReference type="GO" id="GO:0005886">
    <property type="term" value="C:plasma membrane"/>
    <property type="evidence" value="ECO:0007005"/>
    <property type="project" value="MTBBASE"/>
</dbReference>
<dbReference type="GO" id="GO:0005507">
    <property type="term" value="F:copper ion binding"/>
    <property type="evidence" value="ECO:0007669"/>
    <property type="project" value="InterPro"/>
</dbReference>
<dbReference type="GO" id="GO:0004129">
    <property type="term" value="F:cytochrome-c oxidase activity"/>
    <property type="evidence" value="ECO:0007669"/>
    <property type="project" value="UniProtKB-EC"/>
</dbReference>
<dbReference type="GO" id="GO:0042773">
    <property type="term" value="P:ATP synthesis coupled electron transport"/>
    <property type="evidence" value="ECO:0000318"/>
    <property type="project" value="GO_Central"/>
</dbReference>
<dbReference type="FunFam" id="1.10.287.90:FF:000003">
    <property type="entry name" value="Cytochrome C oxidase subunit II"/>
    <property type="match status" value="1"/>
</dbReference>
<dbReference type="FunFam" id="2.60.40.420:FF:000092">
    <property type="entry name" value="Cytochrome C oxidase subunit II"/>
    <property type="match status" value="1"/>
</dbReference>
<dbReference type="Gene3D" id="1.10.287.90">
    <property type="match status" value="1"/>
</dbReference>
<dbReference type="Gene3D" id="2.60.40.420">
    <property type="entry name" value="Cupredoxins - blue copper proteins"/>
    <property type="match status" value="1"/>
</dbReference>
<dbReference type="InterPro" id="IPR045187">
    <property type="entry name" value="CcO_II"/>
</dbReference>
<dbReference type="InterPro" id="IPR002429">
    <property type="entry name" value="CcO_II-like_C"/>
</dbReference>
<dbReference type="InterPro" id="IPR001505">
    <property type="entry name" value="Copper_CuA"/>
</dbReference>
<dbReference type="InterPro" id="IPR008972">
    <property type="entry name" value="Cupredoxin"/>
</dbReference>
<dbReference type="InterPro" id="IPR036257">
    <property type="entry name" value="Cyt_c_oxidase_su2_TM_sf"/>
</dbReference>
<dbReference type="PANTHER" id="PTHR22888:SF9">
    <property type="entry name" value="CYTOCHROME C OXIDASE SUBUNIT 2"/>
    <property type="match status" value="1"/>
</dbReference>
<dbReference type="PANTHER" id="PTHR22888">
    <property type="entry name" value="CYTOCHROME C OXIDASE, SUBUNIT II"/>
    <property type="match status" value="1"/>
</dbReference>
<dbReference type="Pfam" id="PF00116">
    <property type="entry name" value="COX2"/>
    <property type="match status" value="1"/>
</dbReference>
<dbReference type="SUPFAM" id="SSF49503">
    <property type="entry name" value="Cupredoxins"/>
    <property type="match status" value="1"/>
</dbReference>
<dbReference type="SUPFAM" id="SSF81464">
    <property type="entry name" value="Cytochrome c oxidase subunit II-like, transmembrane region"/>
    <property type="match status" value="1"/>
</dbReference>
<dbReference type="PROSITE" id="PS00078">
    <property type="entry name" value="COX2"/>
    <property type="match status" value="1"/>
</dbReference>
<dbReference type="PROSITE" id="PS50857">
    <property type="entry name" value="COX2_CUA"/>
    <property type="match status" value="1"/>
</dbReference>
<accession>P9WP69</accession>
<accession>L0TBL3</accession>
<accession>O30514</accession>
<accession>P63854</accession>
<accession>Q10375</accession>
<proteinExistence type="evidence at protein level"/>
<organism>
    <name type="scientific">Mycobacterium tuberculosis (strain ATCC 25618 / H37Rv)</name>
    <dbReference type="NCBI Taxonomy" id="83332"/>
    <lineage>
        <taxon>Bacteria</taxon>
        <taxon>Bacillati</taxon>
        <taxon>Actinomycetota</taxon>
        <taxon>Actinomycetes</taxon>
        <taxon>Mycobacteriales</taxon>
        <taxon>Mycobacteriaceae</taxon>
        <taxon>Mycobacterium</taxon>
        <taxon>Mycobacterium tuberculosis complex</taxon>
    </lineage>
</organism>
<comment type="function">
    <text evidence="1">Subunits I and II form the functional core of the enzyme complex. Electrons originating in cytochrome c are transferred via heme a and Cu(A) to the binuclear center formed by heme a3 and Cu(B) (By similarity).</text>
</comment>
<comment type="catalytic activity">
    <reaction>
        <text>4 Fe(II)-[cytochrome c] + O2 + 8 H(+)(in) = 4 Fe(III)-[cytochrome c] + 2 H2O + 4 H(+)(out)</text>
        <dbReference type="Rhea" id="RHEA:11436"/>
        <dbReference type="Rhea" id="RHEA-COMP:10350"/>
        <dbReference type="Rhea" id="RHEA-COMP:14399"/>
        <dbReference type="ChEBI" id="CHEBI:15377"/>
        <dbReference type="ChEBI" id="CHEBI:15378"/>
        <dbReference type="ChEBI" id="CHEBI:15379"/>
        <dbReference type="ChEBI" id="CHEBI:29033"/>
        <dbReference type="ChEBI" id="CHEBI:29034"/>
        <dbReference type="EC" id="7.1.1.9"/>
    </reaction>
</comment>
<comment type="cofactor">
    <cofactor evidence="1">
        <name>Cu cation</name>
        <dbReference type="ChEBI" id="CHEBI:23378"/>
    </cofactor>
    <text evidence="1">Binds a copper A center.</text>
</comment>
<comment type="cofactor">
    <cofactor evidence="1">
        <name>heme</name>
        <dbReference type="ChEBI" id="CHEBI:30413"/>
    </cofactor>
</comment>
<comment type="subcellular location">
    <subcellularLocation>
        <location evidence="4">Cell membrane</location>
        <topology evidence="4">Multi-pass membrane protein</topology>
    </subcellularLocation>
</comment>
<comment type="miscellaneous">
    <text>Was identified as a high-confidence drug target.</text>
</comment>
<comment type="similarity">
    <text evidence="4">Belongs to the cytochrome c oxidase subunit 2 family.</text>
</comment>
<comment type="sequence caution" evidence="4">
    <conflict type="erroneous initiation">
        <sequence resource="EMBL-CDS" id="AAB69853"/>
    </conflict>
</comment>
<sequence length="363" mass="40480">MTPRGPGRLQRLSQCRPQRGSGGPARGLRQLALAAMLGALAVTVSGCSWSEALGIGWPEGITPEAHLNRELWIGAVIASLAVGVIVWGLIFWSAVFHRKKNTDTELPRQFGYNMPLELVLTVIPFLIISVLFYFTVVVQEKMLQIAKDPEVVIDITSFQWNWKFGYQRVNFKDGTLTYDGADPERKRAMVSKPEGKDKYGEELVGPVRGLNTEDRTYLNFDKVETLGTSTEIPVLVLPSGKRIEFQMASADVIHAFWVPEFLFKRDVMPNPVANNSVNVFQIEEITKTGAFVGHCAEMCGTYHSMMNFEVRVVTPNDFKAYLQQRIDGKTNAEALRAINQPPLAVTTHPFDTRRGELAPQPVG</sequence>
<evidence type="ECO:0000250" key="1"/>
<evidence type="ECO:0000255" key="2"/>
<evidence type="ECO:0000256" key="3">
    <source>
        <dbReference type="SAM" id="MobiDB-lite"/>
    </source>
</evidence>
<evidence type="ECO:0000305" key="4"/>
<evidence type="ECO:0007829" key="5">
    <source>
        <dbReference type="PDB" id="8HCR"/>
    </source>
</evidence>
<reference key="1">
    <citation type="journal article" date="1999" name="FEMS Microbiol. Lett.">
        <title>Identification of novel immunogenic Mycobacterium tuberculosis peptides that stimulate mononuclear cells from immune donors.</title>
        <authorList>
            <person name="Moran A.J."/>
            <person name="Doran J.L."/>
            <person name="Wu J."/>
            <person name="Treit J.D."/>
            <person name="Ekpo P."/>
            <person name="Kerr V.J."/>
            <person name="Roberts A.D."/>
            <person name="Orme I.M."/>
            <person name="Galant S."/>
            <person name="Ress S.R."/>
            <person name="Nano F.E."/>
        </authorList>
    </citation>
    <scope>NUCLEOTIDE SEQUENCE [GENOMIC DNA]</scope>
    <source>
        <strain>ATCC 25618 / H37Rv</strain>
    </source>
</reference>
<reference key="2">
    <citation type="journal article" date="1998" name="Nature">
        <title>Deciphering the biology of Mycobacterium tuberculosis from the complete genome sequence.</title>
        <authorList>
            <person name="Cole S.T."/>
            <person name="Brosch R."/>
            <person name="Parkhill J."/>
            <person name="Garnier T."/>
            <person name="Churcher C.M."/>
            <person name="Harris D.E."/>
            <person name="Gordon S.V."/>
            <person name="Eiglmeier K."/>
            <person name="Gas S."/>
            <person name="Barry C.E. III"/>
            <person name="Tekaia F."/>
            <person name="Badcock K."/>
            <person name="Basham D."/>
            <person name="Brown D."/>
            <person name="Chillingworth T."/>
            <person name="Connor R."/>
            <person name="Davies R.M."/>
            <person name="Devlin K."/>
            <person name="Feltwell T."/>
            <person name="Gentles S."/>
            <person name="Hamlin N."/>
            <person name="Holroyd S."/>
            <person name="Hornsby T."/>
            <person name="Jagels K."/>
            <person name="Krogh A."/>
            <person name="McLean J."/>
            <person name="Moule S."/>
            <person name="Murphy L.D."/>
            <person name="Oliver S."/>
            <person name="Osborne J."/>
            <person name="Quail M.A."/>
            <person name="Rajandream M.A."/>
            <person name="Rogers J."/>
            <person name="Rutter S."/>
            <person name="Seeger K."/>
            <person name="Skelton S."/>
            <person name="Squares S."/>
            <person name="Squares R."/>
            <person name="Sulston J.E."/>
            <person name="Taylor K."/>
            <person name="Whitehead S."/>
            <person name="Barrell B.G."/>
        </authorList>
    </citation>
    <scope>NUCLEOTIDE SEQUENCE [LARGE SCALE GENOMIC DNA]</scope>
    <source>
        <strain>ATCC 25618 / H37Rv</strain>
    </source>
</reference>
<reference key="3">
    <citation type="journal article" date="2008" name="BMC Syst. Biol.">
        <title>targetTB: a target identification pipeline for Mycobacterium tuberculosis through an interactome, reactome and genome-scale structural analysis.</title>
        <authorList>
            <person name="Raman K."/>
            <person name="Yeturu K."/>
            <person name="Chandra N."/>
        </authorList>
    </citation>
    <scope>IDENTIFICATION AS A DRUG TARGET [LARGE SCALE ANALYSIS]</scope>
</reference>
<reference key="4">
    <citation type="journal article" date="2011" name="Mol. Cell. Proteomics">
        <title>Proteogenomic analysis of Mycobacterium tuberculosis by high resolution mass spectrometry.</title>
        <authorList>
            <person name="Kelkar D.S."/>
            <person name="Kumar D."/>
            <person name="Kumar P."/>
            <person name="Balakrishnan L."/>
            <person name="Muthusamy B."/>
            <person name="Yadav A.K."/>
            <person name="Shrivastava P."/>
            <person name="Marimuthu A."/>
            <person name="Anand S."/>
            <person name="Sundaram H."/>
            <person name="Kingsbury R."/>
            <person name="Harsha H.C."/>
            <person name="Nair B."/>
            <person name="Prasad T.S."/>
            <person name="Chauhan D.S."/>
            <person name="Katoch K."/>
            <person name="Katoch V.M."/>
            <person name="Kumar P."/>
            <person name="Chaerkady R."/>
            <person name="Ramachandran S."/>
            <person name="Dash D."/>
            <person name="Pandey A."/>
        </authorList>
    </citation>
    <scope>IDENTIFICATION BY MASS SPECTROMETRY [LARGE SCALE ANALYSIS]</scope>
    <source>
        <strain>ATCC 25618 / H37Rv</strain>
    </source>
</reference>
<name>COX2_MYCTU</name>
<feature type="signal peptide" evidence="2">
    <location>
        <begin position="1"/>
        <end position="41"/>
    </location>
</feature>
<feature type="chain" id="PRO_0000006058" description="Cytochrome c oxidase subunit 2">
    <location>
        <begin position="42"/>
        <end position="363"/>
    </location>
</feature>
<feature type="transmembrane region" description="Helical" evidence="2">
    <location>
        <begin position="71"/>
        <end position="91"/>
    </location>
</feature>
<feature type="transmembrane region" description="Helical" evidence="2">
    <location>
        <begin position="118"/>
        <end position="138"/>
    </location>
</feature>
<feature type="region of interest" description="Disordered" evidence="3">
    <location>
        <begin position="1"/>
        <end position="23"/>
    </location>
</feature>
<feature type="binding site" evidence="2">
    <location>
        <position position="254"/>
    </location>
    <ligand>
        <name>Cu cation</name>
        <dbReference type="ChEBI" id="CHEBI:23378"/>
        <label>A</label>
    </ligand>
</feature>
<feature type="binding site" evidence="2">
    <location>
        <position position="295"/>
    </location>
    <ligand>
        <name>Cu cation</name>
        <dbReference type="ChEBI" id="CHEBI:23378"/>
        <label>A</label>
    </ligand>
</feature>
<feature type="binding site" evidence="2">
    <location>
        <position position="299"/>
    </location>
    <ligand>
        <name>Cu cation</name>
        <dbReference type="ChEBI" id="CHEBI:23378"/>
        <label>A</label>
    </ligand>
</feature>
<feature type="binding site" evidence="2">
    <location>
        <position position="303"/>
    </location>
    <ligand>
        <name>Cu cation</name>
        <dbReference type="ChEBI" id="CHEBI:23378"/>
        <label>A</label>
    </ligand>
</feature>
<feature type="helix" evidence="5">
    <location>
        <begin position="50"/>
        <end position="53"/>
    </location>
</feature>
<feature type="turn" evidence="5">
    <location>
        <begin position="54"/>
        <end position="56"/>
    </location>
</feature>
<feature type="helix" evidence="5">
    <location>
        <begin position="63"/>
        <end position="95"/>
    </location>
</feature>
<feature type="turn" evidence="5">
    <location>
        <begin position="96"/>
        <end position="98"/>
    </location>
</feature>
<feature type="helix" evidence="5">
    <location>
        <begin position="114"/>
        <end position="142"/>
    </location>
</feature>
<feature type="strand" evidence="5">
    <location>
        <begin position="150"/>
        <end position="158"/>
    </location>
</feature>
<feature type="strand" evidence="5">
    <location>
        <begin position="161"/>
        <end position="164"/>
    </location>
</feature>
<feature type="strand" evidence="5">
    <location>
        <begin position="168"/>
        <end position="170"/>
    </location>
</feature>
<feature type="strand" evidence="5">
    <location>
        <begin position="177"/>
        <end position="179"/>
    </location>
</feature>
<feature type="strand" evidence="5">
    <location>
        <begin position="221"/>
        <end position="223"/>
    </location>
</feature>
<feature type="strand" evidence="5">
    <location>
        <begin position="229"/>
        <end position="231"/>
    </location>
</feature>
<feature type="strand" evidence="5">
    <location>
        <begin position="234"/>
        <end position="237"/>
    </location>
</feature>
<feature type="strand" evidence="5">
    <location>
        <begin position="243"/>
        <end position="246"/>
    </location>
</feature>
<feature type="strand" evidence="5">
    <location>
        <begin position="249"/>
        <end position="252"/>
    </location>
</feature>
<feature type="strand" evidence="5">
    <location>
        <begin position="254"/>
        <end position="258"/>
    </location>
</feature>
<feature type="turn" evidence="5">
    <location>
        <begin position="259"/>
        <end position="262"/>
    </location>
</feature>
<feature type="strand" evidence="5">
    <location>
        <begin position="263"/>
        <end position="267"/>
    </location>
</feature>
<feature type="turn" evidence="5">
    <location>
        <begin position="271"/>
        <end position="275"/>
    </location>
</feature>
<feature type="strand" evidence="5">
    <location>
        <begin position="279"/>
        <end position="282"/>
    </location>
</feature>
<feature type="strand" evidence="5">
    <location>
        <begin position="289"/>
        <end position="295"/>
    </location>
</feature>
<feature type="strand" evidence="5">
    <location>
        <begin position="300"/>
        <end position="302"/>
    </location>
</feature>
<feature type="strand" evidence="5">
    <location>
        <begin position="308"/>
        <end position="312"/>
    </location>
</feature>
<feature type="helix" evidence="5">
    <location>
        <begin position="315"/>
        <end position="326"/>
    </location>
</feature>
<feature type="helix" evidence="5">
    <location>
        <begin position="331"/>
        <end position="336"/>
    </location>
</feature>
<feature type="turn" evidence="5">
    <location>
        <begin position="337"/>
        <end position="339"/>
    </location>
</feature>
<protein>
    <recommendedName>
        <fullName>Cytochrome c oxidase subunit 2</fullName>
        <ecNumber>7.1.1.9</ecNumber>
    </recommendedName>
    <alternativeName>
        <fullName>Cytochrome aa3 subunit 2</fullName>
    </alternativeName>
    <alternativeName>
        <fullName>Cytochrome c oxidase polypeptide II</fullName>
    </alternativeName>
    <alternativeName>
        <fullName>Mtb92</fullName>
    </alternativeName>
</protein>